<feature type="chain" id="PRO_0000162770" description="D-aspartate oxidase">
    <location>
        <begin position="1"/>
        <end position="341"/>
    </location>
</feature>
<feature type="short sequence motif" description="Microbody targeting signal" evidence="28">
    <location>
        <begin position="339"/>
        <end position="341"/>
    </location>
</feature>
<feature type="binding site" evidence="15 29">
    <location>
        <position position="36"/>
    </location>
    <ligand>
        <name>FAD</name>
        <dbReference type="ChEBI" id="CHEBI:57692"/>
    </ligand>
</feature>
<feature type="binding site" evidence="15 29">
    <location>
        <position position="37"/>
    </location>
    <ligand>
        <name>FAD</name>
        <dbReference type="ChEBI" id="CHEBI:57692"/>
    </ligand>
</feature>
<feature type="binding site" evidence="15 29">
    <location>
        <position position="43"/>
    </location>
    <ligand>
        <name>FAD</name>
        <dbReference type="ChEBI" id="CHEBI:57692"/>
    </ligand>
</feature>
<feature type="binding site" evidence="15 29">
    <location>
        <position position="44"/>
    </location>
    <ligand>
        <name>FAD</name>
        <dbReference type="ChEBI" id="CHEBI:57692"/>
    </ligand>
</feature>
<feature type="binding site" evidence="15 29">
    <location>
        <position position="50"/>
    </location>
    <ligand>
        <name>FAD</name>
        <dbReference type="ChEBI" id="CHEBI:57692"/>
    </ligand>
</feature>
<feature type="binding site" evidence="15 29">
    <location>
        <position position="307"/>
    </location>
    <ligand>
        <name>FAD</name>
        <dbReference type="ChEBI" id="CHEBI:57692"/>
    </ligand>
</feature>
<feature type="binding site" evidence="15 29">
    <location>
        <position position="311"/>
    </location>
    <ligand>
        <name>FAD</name>
        <dbReference type="ChEBI" id="CHEBI:57692"/>
    </ligand>
</feature>
<feature type="binding site" evidence="15 29">
    <location>
        <position position="312"/>
    </location>
    <ligand>
        <name>FAD</name>
        <dbReference type="ChEBI" id="CHEBI:57692"/>
    </ligand>
</feature>
<feature type="splice variant" id="VSP_037664" description="In isoform 3 and isoform 4." evidence="21 22 26">
    <original>M</original>
    <variation>MRPARHWETRFGARDFGGFQDCFFRDRLM</variation>
    <location>
        <position position="1"/>
    </location>
</feature>
<feature type="splice variant" id="VSP_001269" description="In isoform DDO-2 and isoform 4." evidence="25 26">
    <location>
        <begin position="95"/>
        <end position="153"/>
    </location>
</feature>
<feature type="sequence variant" id="VAR_036244" description="In a breast cancer sample; somatic mutation." evidence="4">
    <original>F</original>
    <variation>L</variation>
    <location>
        <position position="136"/>
    </location>
</feature>
<feature type="sequence variant" id="VAR_014939" description="In dbSNP:rs17622.">
    <original>Q</original>
    <variation>E</variation>
    <location>
        <position position="189"/>
    </location>
</feature>
<feature type="sequence variant" id="VAR_088719" description="Decreases activity; decreases FAD binding; dbSNP:rs147072212." evidence="12">
    <original>R</original>
    <variation>Q</variation>
    <location>
        <position position="216"/>
    </location>
</feature>
<feature type="sequence variant" id="VAR_014940" description="In dbSNP:rs17621.">
    <original>H</original>
    <variation>Y</variation>
    <location>
        <position position="230"/>
    </location>
</feature>
<feature type="sequence variant" id="VAR_014941" description="In dbSNP:rs17623.">
    <original>L</original>
    <variation>R</variation>
    <location>
        <position position="255"/>
    </location>
</feature>
<feature type="sequence variant" id="VAR_088720" description="Decreases activity; decreases FAD binding; dbSNP:rs140566457." evidence="12">
    <original>S</original>
    <variation>N</variation>
    <location>
        <position position="308"/>
    </location>
</feature>
<feature type="mutagenesis site" description="Slightly decreases activity." evidence="15">
    <original>CEC</original>
    <variation>YEG</variation>
    <location>
        <begin position="141"/>
        <end position="143"/>
    </location>
</feature>
<feature type="sequence conflict" description="In Ref. 2; BAF85718." evidence="27" ref="2">
    <original>R</original>
    <variation>S</variation>
    <location>
        <position position="278"/>
    </location>
</feature>
<feature type="strand" evidence="30">
    <location>
        <begin position="6"/>
        <end position="9"/>
    </location>
</feature>
<feature type="helix" evidence="30">
    <location>
        <begin position="13"/>
        <end position="23"/>
    </location>
</feature>
<feature type="strand" evidence="30">
    <location>
        <begin position="26"/>
        <end position="28"/>
    </location>
</feature>
<feature type="turn" evidence="30">
    <location>
        <begin position="43"/>
        <end position="45"/>
    </location>
</feature>
<feature type="helix" evidence="30">
    <location>
        <begin position="61"/>
        <end position="79"/>
    </location>
</feature>
<feature type="helix" evidence="30">
    <location>
        <begin position="84"/>
        <end position="87"/>
    </location>
</feature>
<feature type="strand" evidence="30">
    <location>
        <begin position="89"/>
        <end position="100"/>
    </location>
</feature>
<feature type="turn" evidence="30">
    <location>
        <begin position="108"/>
        <end position="112"/>
    </location>
</feature>
<feature type="strand" evidence="30">
    <location>
        <begin position="113"/>
        <end position="118"/>
    </location>
</feature>
<feature type="helix" evidence="30">
    <location>
        <begin position="121"/>
        <end position="124"/>
    </location>
</feature>
<feature type="strand" evidence="30">
    <location>
        <begin position="131"/>
        <end position="141"/>
    </location>
</feature>
<feature type="helix" evidence="30">
    <location>
        <begin position="143"/>
        <end position="157"/>
    </location>
</feature>
<feature type="strand" evidence="30">
    <location>
        <begin position="161"/>
        <end position="163"/>
    </location>
</feature>
<feature type="helix" evidence="30">
    <location>
        <begin position="169"/>
        <end position="172"/>
    </location>
</feature>
<feature type="turn" evidence="30">
    <location>
        <begin position="173"/>
        <end position="175"/>
    </location>
</feature>
<feature type="strand" evidence="30">
    <location>
        <begin position="177"/>
        <end position="181"/>
    </location>
</feature>
<feature type="helix" evidence="30">
    <location>
        <begin position="184"/>
        <end position="186"/>
    </location>
</feature>
<feature type="helix" evidence="30">
    <location>
        <begin position="187"/>
        <end position="190"/>
    </location>
</feature>
<feature type="strand" evidence="30">
    <location>
        <begin position="197"/>
        <end position="207"/>
    </location>
</feature>
<feature type="strand" evidence="30">
    <location>
        <begin position="213"/>
        <end position="216"/>
    </location>
</feature>
<feature type="strand" evidence="30">
    <location>
        <begin position="223"/>
        <end position="225"/>
    </location>
</feature>
<feature type="strand" evidence="30">
    <location>
        <begin position="228"/>
        <end position="234"/>
    </location>
</feature>
<feature type="strand" evidence="30">
    <location>
        <begin position="238"/>
        <end position="240"/>
    </location>
</feature>
<feature type="helix" evidence="30">
    <location>
        <begin position="248"/>
        <end position="261"/>
    </location>
</feature>
<feature type="helix" evidence="30">
    <location>
        <begin position="263"/>
        <end position="266"/>
    </location>
</feature>
<feature type="strand" evidence="30">
    <location>
        <begin position="269"/>
        <end position="280"/>
    </location>
</feature>
<feature type="strand" evidence="30">
    <location>
        <begin position="285"/>
        <end position="290"/>
    </location>
</feature>
<feature type="strand" evidence="30">
    <location>
        <begin position="293"/>
        <end position="295"/>
    </location>
</feature>
<feature type="strand" evidence="30">
    <location>
        <begin position="299"/>
        <end position="304"/>
    </location>
</feature>
<feature type="helix" evidence="30">
    <location>
        <begin position="307"/>
        <end position="309"/>
    </location>
</feature>
<feature type="helix" evidence="30">
    <location>
        <begin position="314"/>
        <end position="333"/>
    </location>
</feature>
<feature type="sequence conflict" description="In Ref. 6; DN990727." evidence="27" ref="6">
    <original>T</original>
    <variation>N</variation>
    <location sequence="Q99489-4">
        <position position="9"/>
    </location>
</feature>
<evidence type="ECO:0000250" key="1">
    <source>
        <dbReference type="UniProtKB" id="D3ZDM7"/>
    </source>
</evidence>
<evidence type="ECO:0000250" key="2">
    <source>
        <dbReference type="UniProtKB" id="Q922Z0"/>
    </source>
</evidence>
<evidence type="ECO:0000269" key="3">
    <source>
    </source>
</evidence>
<evidence type="ECO:0000269" key="4">
    <source>
    </source>
</evidence>
<evidence type="ECO:0000269" key="5">
    <source>
    </source>
</evidence>
<evidence type="ECO:0000269" key="6">
    <source>
    </source>
</evidence>
<evidence type="ECO:0000269" key="7">
    <source>
    </source>
</evidence>
<evidence type="ECO:0000269" key="8">
    <source>
    </source>
</evidence>
<evidence type="ECO:0000269" key="9">
    <source>
    </source>
</evidence>
<evidence type="ECO:0000269" key="10">
    <source>
    </source>
</evidence>
<evidence type="ECO:0000269" key="11">
    <source>
    </source>
</evidence>
<evidence type="ECO:0000269" key="12">
    <source>
    </source>
</evidence>
<evidence type="ECO:0000269" key="13">
    <source>
    </source>
</evidence>
<evidence type="ECO:0000269" key="14">
    <source>
    </source>
</evidence>
<evidence type="ECO:0000269" key="15">
    <source>
    </source>
</evidence>
<evidence type="ECO:0000269" key="16">
    <source>
    </source>
</evidence>
<evidence type="ECO:0000269" key="17">
    <source>
    </source>
</evidence>
<evidence type="ECO:0000269" key="18">
    <source>
    </source>
</evidence>
<evidence type="ECO:0000269" key="19">
    <source>
    </source>
</evidence>
<evidence type="ECO:0000269" key="20">
    <source>
    </source>
</evidence>
<evidence type="ECO:0000303" key="21">
    <source>
    </source>
</evidence>
<evidence type="ECO:0000303" key="22">
    <source>
    </source>
</evidence>
<evidence type="ECO:0000303" key="23">
    <source>
    </source>
</evidence>
<evidence type="ECO:0000303" key="24">
    <source>
    </source>
</evidence>
<evidence type="ECO:0000303" key="25">
    <source>
    </source>
</evidence>
<evidence type="ECO:0000303" key="26">
    <source ref="6"/>
</evidence>
<evidence type="ECO:0000305" key="27"/>
<evidence type="ECO:0000305" key="28">
    <source>
    </source>
</evidence>
<evidence type="ECO:0007744" key="29">
    <source>
        <dbReference type="PDB" id="6RKF"/>
    </source>
</evidence>
<evidence type="ECO:0007829" key="30">
    <source>
        <dbReference type="PDB" id="6RKF"/>
    </source>
</evidence>
<protein>
    <recommendedName>
        <fullName>D-aspartate oxidase</fullName>
        <shortName>DASOX</shortName>
        <shortName evidence="23">DASPO</shortName>
        <shortName>DDO</shortName>
        <ecNumber evidence="6 9 10 11 13 17 19">1.4.3.1</ecNumber>
    </recommendedName>
</protein>
<name>OXDD_HUMAN</name>
<dbReference type="EC" id="1.4.3.1" evidence="6 9 10 11 13 17 19"/>
<dbReference type="EMBL" id="D89858">
    <property type="protein sequence ID" value="BAA14031.1"/>
    <property type="molecule type" value="mRNA"/>
</dbReference>
<dbReference type="EMBL" id="AK293029">
    <property type="protein sequence ID" value="BAF85718.1"/>
    <property type="molecule type" value="mRNA"/>
</dbReference>
<dbReference type="EMBL" id="AL050350">
    <property type="status" value="NOT_ANNOTATED_CDS"/>
    <property type="molecule type" value="Genomic_DNA"/>
</dbReference>
<dbReference type="EMBL" id="CH471051">
    <property type="protein sequence ID" value="EAW48316.1"/>
    <property type="molecule type" value="Genomic_DNA"/>
</dbReference>
<dbReference type="EMBL" id="CH471051">
    <property type="protein sequence ID" value="EAW48317.1"/>
    <property type="molecule type" value="Genomic_DNA"/>
</dbReference>
<dbReference type="EMBL" id="BC032786">
    <property type="protein sequence ID" value="AAH32786.3"/>
    <property type="molecule type" value="mRNA"/>
</dbReference>
<dbReference type="EMBL" id="DN990727">
    <property type="status" value="NOT_ANNOTATED_CDS"/>
    <property type="molecule type" value="mRNA"/>
</dbReference>
<dbReference type="CCDS" id="CCDS5082.2">
    <molecule id="Q99489-1"/>
</dbReference>
<dbReference type="CCDS" id="CCDS5083.2">
    <molecule id="Q99489-2"/>
</dbReference>
<dbReference type="PIR" id="JC5438">
    <property type="entry name" value="JC5438"/>
</dbReference>
<dbReference type="PIR" id="JC5439">
    <property type="entry name" value="JC5439"/>
</dbReference>
<dbReference type="RefSeq" id="NP_001359037.1">
    <molecule id="Q99489-1"/>
    <property type="nucleotide sequence ID" value="NM_001372108.2"/>
</dbReference>
<dbReference type="RefSeq" id="NP_003640.2">
    <property type="nucleotide sequence ID" value="NM_003649.2"/>
</dbReference>
<dbReference type="RefSeq" id="NP_004023.2">
    <molecule id="Q99489-2"/>
    <property type="nucleotide sequence ID" value="NM_004032.2"/>
</dbReference>
<dbReference type="PDB" id="6RKF">
    <property type="method" value="X-ray"/>
    <property type="resolution" value="3.22 A"/>
    <property type="chains" value="A/B/C/D/E/F=1-341"/>
</dbReference>
<dbReference type="PDBsum" id="6RKF"/>
<dbReference type="SMR" id="Q99489"/>
<dbReference type="BioGRID" id="114098">
    <property type="interactions" value="3"/>
</dbReference>
<dbReference type="FunCoup" id="Q99489">
    <property type="interactions" value="349"/>
</dbReference>
<dbReference type="IntAct" id="Q99489">
    <property type="interactions" value="2"/>
</dbReference>
<dbReference type="STRING" id="9606.ENSP00000357920"/>
<dbReference type="BindingDB" id="Q99489"/>
<dbReference type="ChEMBL" id="CHEMBL5887"/>
<dbReference type="iPTMnet" id="Q99489"/>
<dbReference type="PhosphoSitePlus" id="Q99489"/>
<dbReference type="BioMuta" id="DDO"/>
<dbReference type="DMDM" id="2494037"/>
<dbReference type="jPOST" id="Q99489"/>
<dbReference type="MassIVE" id="Q99489"/>
<dbReference type="PaxDb" id="9606-ENSP00000357920"/>
<dbReference type="PeptideAtlas" id="Q99489"/>
<dbReference type="ProteomicsDB" id="78291">
    <molecule id="Q99489-1"/>
</dbReference>
<dbReference type="ProteomicsDB" id="78292">
    <molecule id="Q99489-2"/>
</dbReference>
<dbReference type="ProteomicsDB" id="78293">
    <molecule id="Q99489-3"/>
</dbReference>
<dbReference type="ProteomicsDB" id="78294">
    <molecule id="Q99489-4"/>
</dbReference>
<dbReference type="Antibodypedia" id="32325">
    <property type="antibodies" value="223 antibodies from 24 providers"/>
</dbReference>
<dbReference type="DNASU" id="8528"/>
<dbReference type="Ensembl" id="ENST00000368923.8">
    <molecule id="Q99489-2"/>
    <property type="protein sequence ID" value="ENSP00000357919.4"/>
    <property type="gene ID" value="ENSG00000203797.12"/>
</dbReference>
<dbReference type="Ensembl" id="ENST00000368924.9">
    <molecule id="Q99489-1"/>
    <property type="protein sequence ID" value="ENSP00000357920.4"/>
    <property type="gene ID" value="ENSG00000203797.12"/>
</dbReference>
<dbReference type="GeneID" id="8528"/>
<dbReference type="KEGG" id="hsa:8528"/>
<dbReference type="MANE-Select" id="ENST00000368924.9">
    <property type="protein sequence ID" value="ENSP00000357920.4"/>
    <property type="RefSeq nucleotide sequence ID" value="NM_001372108.2"/>
    <property type="RefSeq protein sequence ID" value="NP_001359037.1"/>
</dbReference>
<dbReference type="UCSC" id="uc003puc.4">
    <molecule id="Q99489-1"/>
    <property type="organism name" value="human"/>
</dbReference>
<dbReference type="AGR" id="HGNC:2727"/>
<dbReference type="CTD" id="8528"/>
<dbReference type="DisGeNET" id="8528"/>
<dbReference type="GeneCards" id="DDO"/>
<dbReference type="HGNC" id="HGNC:2727">
    <property type="gene designation" value="DDO"/>
</dbReference>
<dbReference type="HPA" id="ENSG00000203797">
    <property type="expression patterns" value="Tissue enhanced (heart)"/>
</dbReference>
<dbReference type="MIM" id="124450">
    <property type="type" value="gene"/>
</dbReference>
<dbReference type="neXtProt" id="NX_Q99489"/>
<dbReference type="OpenTargets" id="ENSG00000203797"/>
<dbReference type="PharmGKB" id="PA27194"/>
<dbReference type="VEuPathDB" id="HostDB:ENSG00000203797"/>
<dbReference type="eggNOG" id="KOG3923">
    <property type="taxonomic scope" value="Eukaryota"/>
</dbReference>
<dbReference type="GeneTree" id="ENSGT00390000018635"/>
<dbReference type="HOGENOM" id="CLU_034311_0_2_1"/>
<dbReference type="InParanoid" id="Q99489"/>
<dbReference type="OMA" id="DLWELQP"/>
<dbReference type="OrthoDB" id="2015447at2759"/>
<dbReference type="PAN-GO" id="Q99489">
    <property type="GO annotations" value="4 GO annotations based on evolutionary models"/>
</dbReference>
<dbReference type="PhylomeDB" id="Q99489"/>
<dbReference type="TreeFam" id="TF313887"/>
<dbReference type="BRENDA" id="1.4.3.1">
    <property type="organism ID" value="2681"/>
</dbReference>
<dbReference type="PathwayCommons" id="Q99489"/>
<dbReference type="Reactome" id="R-HSA-389661">
    <property type="pathway name" value="Glyoxylate metabolism and glycine degradation"/>
</dbReference>
<dbReference type="Reactome" id="R-HSA-9033241">
    <property type="pathway name" value="Peroxisomal protein import"/>
</dbReference>
<dbReference type="SABIO-RK" id="Q99489"/>
<dbReference type="SignaLink" id="Q99489"/>
<dbReference type="BioGRID-ORCS" id="8528">
    <property type="hits" value="8 hits in 1143 CRISPR screens"/>
</dbReference>
<dbReference type="ChiTaRS" id="DDO">
    <property type="organism name" value="human"/>
</dbReference>
<dbReference type="GeneWiki" id="DDO_(gene)"/>
<dbReference type="GenomeRNAi" id="8528"/>
<dbReference type="Pharos" id="Q99489">
    <property type="development level" value="Tchem"/>
</dbReference>
<dbReference type="PRO" id="PR:Q99489"/>
<dbReference type="Proteomes" id="UP000005640">
    <property type="component" value="Chromosome 6"/>
</dbReference>
<dbReference type="RNAct" id="Q99489">
    <property type="molecule type" value="protein"/>
</dbReference>
<dbReference type="Bgee" id="ENSG00000203797">
    <property type="expression patterns" value="Expressed in heart left ventricle and 136 other cell types or tissues"/>
</dbReference>
<dbReference type="ExpressionAtlas" id="Q99489">
    <property type="expression patterns" value="baseline and differential"/>
</dbReference>
<dbReference type="GO" id="GO:0005737">
    <property type="term" value="C:cytoplasm"/>
    <property type="evidence" value="ECO:0000318"/>
    <property type="project" value="GO_Central"/>
</dbReference>
<dbReference type="GO" id="GO:0005829">
    <property type="term" value="C:cytosol"/>
    <property type="evidence" value="ECO:0000314"/>
    <property type="project" value="HPA"/>
</dbReference>
<dbReference type="GO" id="GO:0005782">
    <property type="term" value="C:peroxisomal matrix"/>
    <property type="evidence" value="ECO:0000250"/>
    <property type="project" value="UniProtKB"/>
</dbReference>
<dbReference type="GO" id="GO:0005777">
    <property type="term" value="C:peroxisome"/>
    <property type="evidence" value="ECO:0000314"/>
    <property type="project" value="UniProtKB"/>
</dbReference>
<dbReference type="GO" id="GO:0008445">
    <property type="term" value="F:D-aspartate oxidase activity"/>
    <property type="evidence" value="ECO:0000314"/>
    <property type="project" value="UniProtKB"/>
</dbReference>
<dbReference type="GO" id="GO:0047821">
    <property type="term" value="F:D-glutamate oxidase activity"/>
    <property type="evidence" value="ECO:0007669"/>
    <property type="project" value="RHEA"/>
</dbReference>
<dbReference type="GO" id="GO:0071949">
    <property type="term" value="F:FAD binding"/>
    <property type="evidence" value="ECO:0000314"/>
    <property type="project" value="UniProtKB"/>
</dbReference>
<dbReference type="GO" id="GO:0006533">
    <property type="term" value="P:aspartate catabolic process"/>
    <property type="evidence" value="ECO:0000314"/>
    <property type="project" value="UniProtKB"/>
</dbReference>
<dbReference type="GO" id="GO:0006531">
    <property type="term" value="P:aspartate metabolic process"/>
    <property type="evidence" value="ECO:0007669"/>
    <property type="project" value="Ensembl"/>
</dbReference>
<dbReference type="GO" id="GO:0019478">
    <property type="term" value="P:D-amino acid catabolic process"/>
    <property type="evidence" value="ECO:0000314"/>
    <property type="project" value="UniProtKB"/>
</dbReference>
<dbReference type="GO" id="GO:0007625">
    <property type="term" value="P:grooming behavior"/>
    <property type="evidence" value="ECO:0007669"/>
    <property type="project" value="Ensembl"/>
</dbReference>
<dbReference type="GO" id="GO:0042445">
    <property type="term" value="P:hormone metabolic process"/>
    <property type="evidence" value="ECO:0007669"/>
    <property type="project" value="Ensembl"/>
</dbReference>
<dbReference type="GO" id="GO:0007320">
    <property type="term" value="P:insemination"/>
    <property type="evidence" value="ECO:0007669"/>
    <property type="project" value="Ensembl"/>
</dbReference>
<dbReference type="GO" id="GO:0050877">
    <property type="term" value="P:nervous system process"/>
    <property type="evidence" value="ECO:0000315"/>
    <property type="project" value="UniProtKB"/>
</dbReference>
<dbReference type="GO" id="GO:0010646">
    <property type="term" value="P:regulation of cell communication"/>
    <property type="evidence" value="ECO:0007669"/>
    <property type="project" value="Ensembl"/>
</dbReference>
<dbReference type="FunFam" id="3.30.9.10:FF:000004">
    <property type="entry name" value="D-amino-acid oxidase"/>
    <property type="match status" value="1"/>
</dbReference>
<dbReference type="FunFam" id="3.40.50.720:FF:000551">
    <property type="entry name" value="D-aspartate oxidase"/>
    <property type="match status" value="1"/>
</dbReference>
<dbReference type="Gene3D" id="3.30.9.10">
    <property type="entry name" value="D-Amino Acid Oxidase, subunit A, domain 2"/>
    <property type="match status" value="1"/>
</dbReference>
<dbReference type="Gene3D" id="3.40.50.720">
    <property type="entry name" value="NAD(P)-binding Rossmann-like Domain"/>
    <property type="match status" value="1"/>
</dbReference>
<dbReference type="InterPro" id="IPR006181">
    <property type="entry name" value="D-amino_acid_oxidase_CS"/>
</dbReference>
<dbReference type="InterPro" id="IPR023209">
    <property type="entry name" value="DAO"/>
</dbReference>
<dbReference type="InterPro" id="IPR006076">
    <property type="entry name" value="FAD-dep_OxRdtase"/>
</dbReference>
<dbReference type="PANTHER" id="PTHR11530">
    <property type="entry name" value="D-AMINO ACID OXIDASE"/>
    <property type="match status" value="1"/>
</dbReference>
<dbReference type="PANTHER" id="PTHR11530:SF11">
    <property type="entry name" value="D-ASPARTATE OXIDASE"/>
    <property type="match status" value="1"/>
</dbReference>
<dbReference type="Pfam" id="PF01266">
    <property type="entry name" value="DAO"/>
    <property type="match status" value="1"/>
</dbReference>
<dbReference type="PIRSF" id="PIRSF000189">
    <property type="entry name" value="D-aa_oxidase"/>
    <property type="match status" value="1"/>
</dbReference>
<dbReference type="SUPFAM" id="SSF54373">
    <property type="entry name" value="FAD-linked reductases, C-terminal domain"/>
    <property type="match status" value="1"/>
</dbReference>
<dbReference type="SUPFAM" id="SSF51971">
    <property type="entry name" value="Nucleotide-binding domain"/>
    <property type="match status" value="1"/>
</dbReference>
<dbReference type="PROSITE" id="PS00677">
    <property type="entry name" value="DAO"/>
    <property type="match status" value="1"/>
</dbReference>
<gene>
    <name type="primary">DDO</name>
</gene>
<reference key="1">
    <citation type="journal article" date="1997" name="J. Biochem.">
        <title>Structural and functional characterization of the human brain D-aspartate oxidase.</title>
        <authorList>
            <person name="Setoyama C."/>
            <person name="Miura R."/>
        </authorList>
    </citation>
    <scope>NUCLEOTIDE SEQUENCE [MRNA] (ISOFORMS DDO-1 AND DDO-2)</scope>
    <scope>FUNCTION</scope>
    <scope>CATALYTIC ACTIVITY</scope>
    <scope>BIOPHYSICOCHEMICAL PROPERTIES</scope>
    <source>
        <tissue>Brain</tissue>
    </source>
</reference>
<reference key="2">
    <citation type="journal article" date="2004" name="Nat. Genet.">
        <title>Complete sequencing and characterization of 21,243 full-length human cDNAs.</title>
        <authorList>
            <person name="Ota T."/>
            <person name="Suzuki Y."/>
            <person name="Nishikawa T."/>
            <person name="Otsuki T."/>
            <person name="Sugiyama T."/>
            <person name="Irie R."/>
            <person name="Wakamatsu A."/>
            <person name="Hayashi K."/>
            <person name="Sato H."/>
            <person name="Nagai K."/>
            <person name="Kimura K."/>
            <person name="Makita H."/>
            <person name="Sekine M."/>
            <person name="Obayashi M."/>
            <person name="Nishi T."/>
            <person name="Shibahara T."/>
            <person name="Tanaka T."/>
            <person name="Ishii S."/>
            <person name="Yamamoto J."/>
            <person name="Saito K."/>
            <person name="Kawai Y."/>
            <person name="Isono Y."/>
            <person name="Nakamura Y."/>
            <person name="Nagahari K."/>
            <person name="Murakami K."/>
            <person name="Yasuda T."/>
            <person name="Iwayanagi T."/>
            <person name="Wagatsuma M."/>
            <person name="Shiratori A."/>
            <person name="Sudo H."/>
            <person name="Hosoiri T."/>
            <person name="Kaku Y."/>
            <person name="Kodaira H."/>
            <person name="Kondo H."/>
            <person name="Sugawara M."/>
            <person name="Takahashi M."/>
            <person name="Kanda K."/>
            <person name="Yokoi T."/>
            <person name="Furuya T."/>
            <person name="Kikkawa E."/>
            <person name="Omura Y."/>
            <person name="Abe K."/>
            <person name="Kamihara K."/>
            <person name="Katsuta N."/>
            <person name="Sato K."/>
            <person name="Tanikawa M."/>
            <person name="Yamazaki M."/>
            <person name="Ninomiya K."/>
            <person name="Ishibashi T."/>
            <person name="Yamashita H."/>
            <person name="Murakawa K."/>
            <person name="Fujimori K."/>
            <person name="Tanai H."/>
            <person name="Kimata M."/>
            <person name="Watanabe M."/>
            <person name="Hiraoka S."/>
            <person name="Chiba Y."/>
            <person name="Ishida S."/>
            <person name="Ono Y."/>
            <person name="Takiguchi S."/>
            <person name="Watanabe S."/>
            <person name="Yosida M."/>
            <person name="Hotuta T."/>
            <person name="Kusano J."/>
            <person name="Kanehori K."/>
            <person name="Takahashi-Fujii A."/>
            <person name="Hara H."/>
            <person name="Tanase T.-O."/>
            <person name="Nomura Y."/>
            <person name="Togiya S."/>
            <person name="Komai F."/>
            <person name="Hara R."/>
            <person name="Takeuchi K."/>
            <person name="Arita M."/>
            <person name="Imose N."/>
            <person name="Musashino K."/>
            <person name="Yuuki H."/>
            <person name="Oshima A."/>
            <person name="Sasaki N."/>
            <person name="Aotsuka S."/>
            <person name="Yoshikawa Y."/>
            <person name="Matsunawa H."/>
            <person name="Ichihara T."/>
            <person name="Shiohata N."/>
            <person name="Sano S."/>
            <person name="Moriya S."/>
            <person name="Momiyama H."/>
            <person name="Satoh N."/>
            <person name="Takami S."/>
            <person name="Terashima Y."/>
            <person name="Suzuki O."/>
            <person name="Nakagawa S."/>
            <person name="Senoh A."/>
            <person name="Mizoguchi H."/>
            <person name="Goto Y."/>
            <person name="Shimizu F."/>
            <person name="Wakebe H."/>
            <person name="Hishigaki H."/>
            <person name="Watanabe T."/>
            <person name="Sugiyama A."/>
            <person name="Takemoto M."/>
            <person name="Kawakami B."/>
            <person name="Yamazaki M."/>
            <person name="Watanabe K."/>
            <person name="Kumagai A."/>
            <person name="Itakura S."/>
            <person name="Fukuzumi Y."/>
            <person name="Fujimori Y."/>
            <person name="Komiyama M."/>
            <person name="Tashiro H."/>
            <person name="Tanigami A."/>
            <person name="Fujiwara T."/>
            <person name="Ono T."/>
            <person name="Yamada K."/>
            <person name="Fujii Y."/>
            <person name="Ozaki K."/>
            <person name="Hirao M."/>
            <person name="Ohmori Y."/>
            <person name="Kawabata A."/>
            <person name="Hikiji T."/>
            <person name="Kobatake N."/>
            <person name="Inagaki H."/>
            <person name="Ikema Y."/>
            <person name="Okamoto S."/>
            <person name="Okitani R."/>
            <person name="Kawakami T."/>
            <person name="Noguchi S."/>
            <person name="Itoh T."/>
            <person name="Shigeta K."/>
            <person name="Senba T."/>
            <person name="Matsumura K."/>
            <person name="Nakajima Y."/>
            <person name="Mizuno T."/>
            <person name="Morinaga M."/>
            <person name="Sasaki M."/>
            <person name="Togashi T."/>
            <person name="Oyama M."/>
            <person name="Hata H."/>
            <person name="Watanabe M."/>
            <person name="Komatsu T."/>
            <person name="Mizushima-Sugano J."/>
            <person name="Satoh T."/>
            <person name="Shirai Y."/>
            <person name="Takahashi Y."/>
            <person name="Nakagawa K."/>
            <person name="Okumura K."/>
            <person name="Nagase T."/>
            <person name="Nomura N."/>
            <person name="Kikuchi H."/>
            <person name="Masuho Y."/>
            <person name="Yamashita R."/>
            <person name="Nakai K."/>
            <person name="Yada T."/>
            <person name="Nakamura Y."/>
            <person name="Ohara O."/>
            <person name="Isogai T."/>
            <person name="Sugano S."/>
        </authorList>
    </citation>
    <scope>NUCLEOTIDE SEQUENCE [LARGE SCALE MRNA] (ISOFORM 3)</scope>
    <source>
        <tissue>Uterus</tissue>
    </source>
</reference>
<reference key="3">
    <citation type="journal article" date="2003" name="Nature">
        <title>The DNA sequence and analysis of human chromosome 6.</title>
        <authorList>
            <person name="Mungall A.J."/>
            <person name="Palmer S.A."/>
            <person name="Sims S.K."/>
            <person name="Edwards C.A."/>
            <person name="Ashurst J.L."/>
            <person name="Wilming L."/>
            <person name="Jones M.C."/>
            <person name="Horton R."/>
            <person name="Hunt S.E."/>
            <person name="Scott C.E."/>
            <person name="Gilbert J.G.R."/>
            <person name="Clamp M.E."/>
            <person name="Bethel G."/>
            <person name="Milne S."/>
            <person name="Ainscough R."/>
            <person name="Almeida J.P."/>
            <person name="Ambrose K.D."/>
            <person name="Andrews T.D."/>
            <person name="Ashwell R.I.S."/>
            <person name="Babbage A.K."/>
            <person name="Bagguley C.L."/>
            <person name="Bailey J."/>
            <person name="Banerjee R."/>
            <person name="Barker D.J."/>
            <person name="Barlow K.F."/>
            <person name="Bates K."/>
            <person name="Beare D.M."/>
            <person name="Beasley H."/>
            <person name="Beasley O."/>
            <person name="Bird C.P."/>
            <person name="Blakey S.E."/>
            <person name="Bray-Allen S."/>
            <person name="Brook J."/>
            <person name="Brown A.J."/>
            <person name="Brown J.Y."/>
            <person name="Burford D.C."/>
            <person name="Burrill W."/>
            <person name="Burton J."/>
            <person name="Carder C."/>
            <person name="Carter N.P."/>
            <person name="Chapman J.C."/>
            <person name="Clark S.Y."/>
            <person name="Clark G."/>
            <person name="Clee C.M."/>
            <person name="Clegg S."/>
            <person name="Cobley V."/>
            <person name="Collier R.E."/>
            <person name="Collins J.E."/>
            <person name="Colman L.K."/>
            <person name="Corby N.R."/>
            <person name="Coville G.J."/>
            <person name="Culley K.M."/>
            <person name="Dhami P."/>
            <person name="Davies J."/>
            <person name="Dunn M."/>
            <person name="Earthrowl M.E."/>
            <person name="Ellington A.E."/>
            <person name="Evans K.A."/>
            <person name="Faulkner L."/>
            <person name="Francis M.D."/>
            <person name="Frankish A."/>
            <person name="Frankland J."/>
            <person name="French L."/>
            <person name="Garner P."/>
            <person name="Garnett J."/>
            <person name="Ghori M.J."/>
            <person name="Gilby L.M."/>
            <person name="Gillson C.J."/>
            <person name="Glithero R.J."/>
            <person name="Grafham D.V."/>
            <person name="Grant M."/>
            <person name="Gribble S."/>
            <person name="Griffiths C."/>
            <person name="Griffiths M.N.D."/>
            <person name="Hall R."/>
            <person name="Halls K.S."/>
            <person name="Hammond S."/>
            <person name="Harley J.L."/>
            <person name="Hart E.A."/>
            <person name="Heath P.D."/>
            <person name="Heathcott R."/>
            <person name="Holmes S.J."/>
            <person name="Howden P.J."/>
            <person name="Howe K.L."/>
            <person name="Howell G.R."/>
            <person name="Huckle E."/>
            <person name="Humphray S.J."/>
            <person name="Humphries M.D."/>
            <person name="Hunt A.R."/>
            <person name="Johnson C.M."/>
            <person name="Joy A.A."/>
            <person name="Kay M."/>
            <person name="Keenan S.J."/>
            <person name="Kimberley A.M."/>
            <person name="King A."/>
            <person name="Laird G.K."/>
            <person name="Langford C."/>
            <person name="Lawlor S."/>
            <person name="Leongamornlert D.A."/>
            <person name="Leversha M."/>
            <person name="Lloyd C.R."/>
            <person name="Lloyd D.M."/>
            <person name="Loveland J.E."/>
            <person name="Lovell J."/>
            <person name="Martin S."/>
            <person name="Mashreghi-Mohammadi M."/>
            <person name="Maslen G.L."/>
            <person name="Matthews L."/>
            <person name="McCann O.T."/>
            <person name="McLaren S.J."/>
            <person name="McLay K."/>
            <person name="McMurray A."/>
            <person name="Moore M.J.F."/>
            <person name="Mullikin J.C."/>
            <person name="Niblett D."/>
            <person name="Nickerson T."/>
            <person name="Novik K.L."/>
            <person name="Oliver K."/>
            <person name="Overton-Larty E.K."/>
            <person name="Parker A."/>
            <person name="Patel R."/>
            <person name="Pearce A.V."/>
            <person name="Peck A.I."/>
            <person name="Phillimore B.J.C.T."/>
            <person name="Phillips S."/>
            <person name="Plumb R.W."/>
            <person name="Porter K.M."/>
            <person name="Ramsey Y."/>
            <person name="Ranby S.A."/>
            <person name="Rice C.M."/>
            <person name="Ross M.T."/>
            <person name="Searle S.M."/>
            <person name="Sehra H.K."/>
            <person name="Sheridan E."/>
            <person name="Skuce C.D."/>
            <person name="Smith S."/>
            <person name="Smith M."/>
            <person name="Spraggon L."/>
            <person name="Squares S.L."/>
            <person name="Steward C.A."/>
            <person name="Sycamore N."/>
            <person name="Tamlyn-Hall G."/>
            <person name="Tester J."/>
            <person name="Theaker A.J."/>
            <person name="Thomas D.W."/>
            <person name="Thorpe A."/>
            <person name="Tracey A."/>
            <person name="Tromans A."/>
            <person name="Tubby B."/>
            <person name="Wall M."/>
            <person name="Wallis J.M."/>
            <person name="West A.P."/>
            <person name="White S.S."/>
            <person name="Whitehead S.L."/>
            <person name="Whittaker H."/>
            <person name="Wild A."/>
            <person name="Willey D.J."/>
            <person name="Wilmer T.E."/>
            <person name="Wood J.M."/>
            <person name="Wray P.W."/>
            <person name="Wyatt J.C."/>
            <person name="Young L."/>
            <person name="Younger R.M."/>
            <person name="Bentley D.R."/>
            <person name="Coulson A."/>
            <person name="Durbin R.M."/>
            <person name="Hubbard T."/>
            <person name="Sulston J.E."/>
            <person name="Dunham I."/>
            <person name="Rogers J."/>
            <person name="Beck S."/>
        </authorList>
    </citation>
    <scope>NUCLEOTIDE SEQUENCE [LARGE SCALE GENOMIC DNA]</scope>
</reference>
<reference key="4">
    <citation type="submission" date="2005-09" db="EMBL/GenBank/DDBJ databases">
        <authorList>
            <person name="Mural R.J."/>
            <person name="Istrail S."/>
            <person name="Sutton G.G."/>
            <person name="Florea L."/>
            <person name="Halpern A.L."/>
            <person name="Mobarry C.M."/>
            <person name="Lippert R."/>
            <person name="Walenz B."/>
            <person name="Shatkay H."/>
            <person name="Dew I."/>
            <person name="Miller J.R."/>
            <person name="Flanigan M.J."/>
            <person name="Edwards N.J."/>
            <person name="Bolanos R."/>
            <person name="Fasulo D."/>
            <person name="Halldorsson B.V."/>
            <person name="Hannenhalli S."/>
            <person name="Turner R."/>
            <person name="Yooseph S."/>
            <person name="Lu F."/>
            <person name="Nusskern D.R."/>
            <person name="Shue B.C."/>
            <person name="Zheng X.H."/>
            <person name="Zhong F."/>
            <person name="Delcher A.L."/>
            <person name="Huson D.H."/>
            <person name="Kravitz S.A."/>
            <person name="Mouchard L."/>
            <person name="Reinert K."/>
            <person name="Remington K.A."/>
            <person name="Clark A.G."/>
            <person name="Waterman M.S."/>
            <person name="Eichler E.E."/>
            <person name="Adams M.D."/>
            <person name="Hunkapiller M.W."/>
            <person name="Myers E.W."/>
            <person name="Venter J.C."/>
        </authorList>
    </citation>
    <scope>NUCLEOTIDE SEQUENCE [LARGE SCALE GENOMIC DNA]</scope>
</reference>
<reference key="5">
    <citation type="journal article" date="2004" name="Genome Res.">
        <title>The status, quality, and expansion of the NIH full-length cDNA project: the Mammalian Gene Collection (MGC).</title>
        <authorList>
            <consortium name="The MGC Project Team"/>
        </authorList>
    </citation>
    <scope>NUCLEOTIDE SEQUENCE [LARGE SCALE MRNA] (ISOFORM 3)</scope>
    <source>
        <tissue>Brain</tissue>
    </source>
</reference>
<reference key="6">
    <citation type="submission" date="2005-05" db="EMBL/GenBank/DDBJ databases">
        <title>High-throughput cloning of full-length human cDNAs directly from cDNA libraries optimized for large and rare transcripts.</title>
        <authorList>
            <person name="Birkett C."/>
            <person name="Cho J."/>
            <person name="Gau Y."/>
            <person name="Hamer R."/>
            <person name="Kelly S."/>
            <person name="Kovacs K."/>
            <person name="Liu L."/>
            <person name="Liu X."/>
            <person name="Porter J."/>
            <person name="Sachs A."/>
            <person name="Shu Y."/>
            <person name="Sun Z."/>
            <person name="Wong J."/>
            <person name="Wu M."/>
            <person name="Zhang X."/>
            <person name="Jay G."/>
            <person name="He W."/>
        </authorList>
    </citation>
    <scope>NUCLEOTIDE SEQUENCE [MRNA] OF 1-206 (ISOFORM 4)</scope>
</reference>
<reference key="7">
    <citation type="journal article" date="1991" name="Biochim. Biophys. Acta">
        <title>D-aspartate oxidase, a peroxisomal enzyme in liver of rat and man.</title>
        <authorList>
            <person name="Van Veldhoven P.P."/>
            <person name="Brees C."/>
            <person name="Mannaerts G.P."/>
        </authorList>
    </citation>
    <scope>FUNCTION</scope>
    <scope>SUBCELLULAR LOCATION</scope>
    <scope>TISSUE SPECIFICITY</scope>
</reference>
<reference key="8">
    <citation type="journal article" date="1998" name="Biochem. J.">
        <title>C-terminal tripeptide Ser-Asn-Leu (SNL) of human D-aspartate oxidase is a functional peroxisome-targeting signal.</title>
        <authorList>
            <person name="Amery L."/>
            <person name="Brees C."/>
            <person name="Baes M."/>
            <person name="Setoyama C."/>
            <person name="Miura R."/>
            <person name="Mannaerts G.P."/>
            <person name="Van Veldhoven P.P."/>
        </authorList>
    </citation>
    <scope>INTERACTION WITH PEX5</scope>
    <scope>MOTIF</scope>
</reference>
<reference key="9">
    <citation type="journal article" date="2002" name="J. Comp. Neurol.">
        <title>Cellular and subcellular distribution of D-aspartate oxidase in human and rat brain.</title>
        <authorList>
            <person name="Zaar K."/>
            <person name="Koest H.P."/>
            <person name="Schad A."/>
            <person name="Voelkl A."/>
            <person name="Baumgart E."/>
            <person name="Fahimi H.D."/>
        </authorList>
    </citation>
    <scope>TISSUE SPECIFICITY</scope>
</reference>
<reference key="10">
    <citation type="journal article" date="2010" name="Biochimie">
        <title>Thiolactomycin inhibits D-aspartate oxidase: a novel approach to probing the active site environment.</title>
        <authorList>
            <person name="Katane M."/>
            <person name="Saitoh Y."/>
            <person name="Hanai T."/>
            <person name="Sekine M."/>
            <person name="Furuchi T."/>
            <person name="Koyama N."/>
            <person name="Nakagome I."/>
            <person name="Tomoda H."/>
            <person name="Hirono S."/>
            <person name="Homma H."/>
        </authorList>
    </citation>
    <scope>FUNCTION</scope>
    <scope>CATALYTIC ACTIVITY</scope>
    <scope>COFACTOR</scope>
    <scope>ACTIVITY REGULATION</scope>
</reference>
<reference key="11">
    <citation type="journal article" date="2013" name="J. Med. Chem.">
        <title>Identification of novel D-amino acid oxidase inhibitors by in silico screening and their functional characterization in vitro.</title>
        <authorList>
            <person name="Katane M."/>
            <person name="Osaka N."/>
            <person name="Matsuda S."/>
            <person name="Maeda K."/>
            <person name="Kawata T."/>
            <person name="Saitoh Y."/>
            <person name="Sekine M."/>
            <person name="Furuchi T."/>
            <person name="Doi I."/>
            <person name="Hirono S."/>
            <person name="Homma H."/>
        </authorList>
    </citation>
    <scope>FUNCTION</scope>
    <scope>CATALYTIC ACTIVITY</scope>
    <scope>ACTIVITY REGULATION</scope>
</reference>
<reference key="12">
    <citation type="journal article" date="2015" name="Biol. Pharm. Bull.">
        <title>Characterization of the enzymatic and structural properties of human D-aspartate oxidase and comparison with those of the rat and mouse enzymes.</title>
        <authorList>
            <person name="Katane M."/>
            <person name="Kawata T."/>
            <person name="Nakayama K."/>
            <person name="Saitoh Y."/>
            <person name="Kaneko Y."/>
            <person name="Matsuda S."/>
            <person name="Saitoh Y."/>
            <person name="Miyamoto T."/>
            <person name="Sekine M."/>
            <person name="Homma H."/>
        </authorList>
    </citation>
    <scope>FUNCTION</scope>
    <scope>CATALYTIC ACTIVITY</scope>
    <scope>ACTIVITY REGULATION</scope>
    <scope>BIOPHYSICOCHEMICAL PROPERTIES</scope>
</reference>
<reference key="13">
    <citation type="journal article" date="2015" name="Transl. Psychiatry">
        <title>A role for D-aspartate oxidase in schizophrenia and in schizophrenia-related symptoms induced by phencyclidine in mice.</title>
        <authorList>
            <person name="Errico F."/>
            <person name="D'Argenio V."/>
            <person name="Sforazzini F."/>
            <person name="Iasevoli F."/>
            <person name="Squillace M."/>
            <person name="Guerri G."/>
            <person name="Napolitano F."/>
            <person name="Angrisano T."/>
            <person name="Di Maio A."/>
            <person name="Keller S."/>
            <person name="Vitucci D."/>
            <person name="Galbusera A."/>
            <person name="Chiariotti L."/>
            <person name="Bertolino A."/>
            <person name="de Bartolomeis A."/>
            <person name="Salvatore F."/>
            <person name="Gozzi A."/>
            <person name="Usiello A."/>
        </authorList>
    </citation>
    <scope>TISSUE SPECIFICITY</scope>
</reference>
<reference key="14">
    <citation type="journal article" date="2017" name="Schizophrenia">
        <title>Decreased free d-aspartate levels are linked to enhanced d-aspartate oxidase activity in the dorsolateral prefrontal cortex of schizophrenia patients.</title>
        <authorList>
            <person name="Nuzzo T."/>
            <person name="Sacchi S."/>
            <person name="Errico F."/>
            <person name="Keller S."/>
            <person name="Palumbo O."/>
            <person name="Florio E."/>
            <person name="Punzo D."/>
            <person name="Napolitano F."/>
            <person name="Copetti M."/>
            <person name="Carella M."/>
            <person name="Chiariotti L."/>
            <person name="Bertolino A."/>
            <person name="Pollegioni L."/>
            <person name="Usiello A."/>
        </authorList>
    </citation>
    <scope>FUNCTION</scope>
    <scope>CATALYTIC ACTIVITY</scope>
    <scope>ACTIVITY REGULATION</scope>
    <scope>TISSUE SPECIFICITY</scope>
</reference>
<reference key="15">
    <citation type="journal article" date="2017" name="Sci. Rep.">
        <title>Olanzapine, but not clozapine, increases glutamate release in the prefrontal cortex of freely moving mice by inhibiting D-aspartate oxidase activity.</title>
        <authorList>
            <person name="Sacchi S."/>
            <person name="Novellis V."/>
            <person name="Paolone G."/>
            <person name="Nuzzo T."/>
            <person name="Iannotta M."/>
            <person name="Belardo C."/>
            <person name="Squillace M."/>
            <person name="Bolognesi P."/>
            <person name="Rosini E."/>
            <person name="Motta Z."/>
            <person name="Frassineti M."/>
            <person name="Bertolino A."/>
            <person name="Pollegioni L."/>
            <person name="Morari M."/>
            <person name="Maione S."/>
            <person name="Errico F."/>
            <person name="Usiello A."/>
        </authorList>
    </citation>
    <scope>FUNCTION</scope>
    <scope>CATALYTIC ACTIVITY</scope>
    <scope>ACTIVITY REGULATION</scope>
</reference>
<reference key="16">
    <citation type="journal article" date="2018" name="Biochim. Biophys. Acta">
        <title>Rat d-aspartate oxidase is more similar to the human enzyme than the mouse enzyme.</title>
        <authorList>
            <person name="Katane M."/>
            <person name="Kuwabara H."/>
            <person name="Nakayama K."/>
            <person name="Saitoh Y."/>
            <person name="Miyamoto T."/>
            <person name="Sekine M."/>
            <person name="Homma H."/>
        </authorList>
    </citation>
    <scope>FUNCTION</scope>
    <scope>CATALYTIC ACTIVITY</scope>
    <scope>SUBUNIT</scope>
</reference>
<reference key="17">
    <citation type="journal article" date="2019" name="Exp. Neurol.">
        <title>Free d-aspartate triggers NMDA receptor-dependent cell death in primary cortical neurons and perturbs JNK activation, Tau phosphorylation, and protein SUMOylation in the cerebral cortex of mice lacking d-aspartate oxidase activity.</title>
        <authorList>
            <person name="Nuzzo T."/>
            <person name="Feligioni M."/>
            <person name="Cristino L."/>
            <person name="Pagano I."/>
            <person name="Marcelli S."/>
            <person name="Iannuzzi F."/>
            <person name="Imperatore R."/>
            <person name="D'Angelo L."/>
            <person name="Petrella C."/>
            <person name="Carella M."/>
            <person name="Pollegioni L."/>
            <person name="Sacchi S."/>
            <person name="Punzo D."/>
            <person name="De Girolamo P."/>
            <person name="Errico F."/>
            <person name="Canu N."/>
            <person name="Usiello A."/>
        </authorList>
    </citation>
    <scope>TISSUE SPECIFICITY</scope>
</reference>
<reference key="18">
    <citation type="journal article" date="2020" name="Biochim. Biophys. Acta">
        <title>Biochemical characterization of mouse d-aspartate oxidase.</title>
        <authorList>
            <person name="Puggioni V."/>
            <person name="Savinelli A."/>
            <person name="Miceli M."/>
            <person name="Molla G."/>
            <person name="Pollegioni L."/>
            <person name="Sacchi S."/>
        </authorList>
    </citation>
    <scope>FUNCTION</scope>
    <scope>CATALYTIC ACTIVITY</scope>
    <scope>BIOPHYSICOCHEMICAL PROPERTIES</scope>
</reference>
<reference key="19">
    <citation type="journal article" date="2021" name="FEBS J.">
        <title>Cellular studies of the two main isoforms of human d-aspartate oxidase.</title>
        <authorList>
            <person name="Rabattoni V."/>
            <person name="Pollegioni L."/>
            <person name="Tedeschi G."/>
            <person name="Maffioli E."/>
            <person name="Sacchi S."/>
        </authorList>
    </citation>
    <scope>CATALYTIC ACTIVITY (ISOFORMS 1 AND 3)</scope>
    <scope>BIOPHYSICOCHEMICAL PROPERTIES (ISOFORMS 1 AND 3)</scope>
    <scope>IDENTIFICATION BY MASS SPECTROMETRY</scope>
    <scope>SUBCELLULAR LOCATION (ISOFORMS 1 AND 3)</scope>
</reference>
<reference key="20">
    <citation type="journal article" date="2023" name="Protein Sci.">
        <title>On the regulation of human D-aspartate oxidase.</title>
        <authorList>
            <person name="Rabattoni V."/>
            <person name="Motta Z."/>
            <person name="Miceli M."/>
            <person name="Molla G."/>
            <person name="Fissore A."/>
            <person name="Adinolfi S."/>
            <person name="Pollegioni L."/>
            <person name="Sacchi S."/>
        </authorList>
    </citation>
    <scope>COFACTOR</scope>
    <scope>INTERACTION WITH DAOA</scope>
    <scope>SUBCELLULAR LOCATION</scope>
    <scope>S-NITROSYLATION</scope>
</reference>
<reference evidence="29" key="21">
    <citation type="journal article" date="2020" name="FASEB J.">
        <title>Structure and kinetic properties of human d-aspartate oxidase, the enzyme-controlling d-aspartate levels in brain.</title>
        <authorList>
            <person name="Molla G."/>
            <person name="Chaves-Sanjuan A."/>
            <person name="Savinelli A."/>
            <person name="Nardini M."/>
            <person name="Pollegioni L."/>
        </authorList>
    </citation>
    <scope>X-RAY CRYSTALLOGRAPHY (3.22 ANGSTROMS) OF MUTANT CYS-141 AND CYS-143 IN COMPLEX WITH FAD</scope>
    <scope>FUNCTION</scope>
    <scope>CATALYTIC ACTIVITY</scope>
    <scope>COFACTOR</scope>
    <scope>BIOPHYSICOCHEMICAL PROPERTIES</scope>
    <scope>SUBUNIT</scope>
    <scope>FAD BINDING</scope>
    <scope>MUTAGENESIS OF 141-CYS--CYS-143</scope>
</reference>
<reference key="22">
    <citation type="journal article" date="2006" name="Science">
        <title>The consensus coding sequences of human breast and colorectal cancers.</title>
        <authorList>
            <person name="Sjoeblom T."/>
            <person name="Jones S."/>
            <person name="Wood L.D."/>
            <person name="Parsons D.W."/>
            <person name="Lin J."/>
            <person name="Barber T.D."/>
            <person name="Mandelker D."/>
            <person name="Leary R.J."/>
            <person name="Ptak J."/>
            <person name="Silliman N."/>
            <person name="Szabo S."/>
            <person name="Buckhaults P."/>
            <person name="Farrell C."/>
            <person name="Meeh P."/>
            <person name="Markowitz S.D."/>
            <person name="Willis J."/>
            <person name="Dawson D."/>
            <person name="Willson J.K.V."/>
            <person name="Gazdar A.F."/>
            <person name="Hartigan J."/>
            <person name="Wu L."/>
            <person name="Liu C."/>
            <person name="Parmigiani G."/>
            <person name="Park B.H."/>
            <person name="Bachman K.E."/>
            <person name="Papadopoulos N."/>
            <person name="Vogelstein B."/>
            <person name="Kinzler K.W."/>
            <person name="Velculescu V.E."/>
        </authorList>
    </citation>
    <scope>VARIANT [LARGE SCALE ANALYSIS] LEU-136</scope>
</reference>
<reference key="23">
    <citation type="journal article" date="2017" name="Biochim. Biophys. Acta">
        <title>Structure-function relationships in human d-aspartate oxidase: characterisation of variants corresponding to known single nucleotide polymorphisms.</title>
        <authorList>
            <person name="Katane M."/>
            <person name="Kanazawa R."/>
            <person name="Kobayashi R."/>
            <person name="Oishi M."/>
            <person name="Nakayama K."/>
            <person name="Saitoh Y."/>
            <person name="Miyamoto T."/>
            <person name="Sekine M."/>
            <person name="Homma H."/>
        </authorList>
    </citation>
    <scope>CHARACTERIZATION OF VARIANTS GLN-216 AND ASN-308</scope>
    <scope>FUNCTION</scope>
    <scope>CATALYTIC ACTIVITY</scope>
    <scope>BIOPHYSICOCHEMICAL PROPERTIES</scope>
    <scope>SUBUNIT</scope>
</reference>
<comment type="function">
    <text evidence="1 2 5 6 7 9 10 11 12 13 15 16 19">Selectively catalyzes the oxidative deamination of acidic amino acids (PubMed:1991137, PubMed:20603179, PubMed:23391306, PubMed:25747990, PubMed:28393897, PubMed:28560262, PubMed:28629864, PubMed:29292239, PubMed:31914658, PubMed:32553892, PubMed:9163533). Suppresses the level of D-aspartate in the brain, an amino acid that can act as an agonist for glutamate receptors (PubMed:28560262). Protects the organism from the toxicity of D-amino acids (By similarity). May also function in the intestine (By similarity).</text>
</comment>
<comment type="catalytic activity">
    <reaction evidence="6 7 9 10 11 12 13 15 16 19">
        <text>D-aspartate + O2 + H2O = oxaloacetate + H2O2 + NH4(+)</text>
        <dbReference type="Rhea" id="RHEA:12512"/>
        <dbReference type="ChEBI" id="CHEBI:15377"/>
        <dbReference type="ChEBI" id="CHEBI:15379"/>
        <dbReference type="ChEBI" id="CHEBI:16240"/>
        <dbReference type="ChEBI" id="CHEBI:16452"/>
        <dbReference type="ChEBI" id="CHEBI:28938"/>
        <dbReference type="ChEBI" id="CHEBI:29990"/>
        <dbReference type="EC" id="1.4.3.1"/>
    </reaction>
    <physiologicalReaction direction="left-to-right" evidence="6 7 9 10 11 12 13 15 16 19">
        <dbReference type="Rhea" id="RHEA:12513"/>
    </physiologicalReaction>
</comment>
<comment type="catalytic activity">
    <reaction evidence="9 12 13 16">
        <text>D-glutamate + O2 + H2O = H2O2 + 2-oxoglutarate + NH4(+)</text>
        <dbReference type="Rhea" id="RHEA:10028"/>
        <dbReference type="ChEBI" id="CHEBI:15377"/>
        <dbReference type="ChEBI" id="CHEBI:15379"/>
        <dbReference type="ChEBI" id="CHEBI:16240"/>
        <dbReference type="ChEBI" id="CHEBI:16810"/>
        <dbReference type="ChEBI" id="CHEBI:28938"/>
        <dbReference type="ChEBI" id="CHEBI:29986"/>
    </reaction>
    <physiologicalReaction direction="left-to-right" evidence="9 12 13 16">
        <dbReference type="Rhea" id="RHEA:10029"/>
    </physiologicalReaction>
</comment>
<comment type="catalytic activity">
    <molecule>Isoform DDO-1</molecule>
    <reaction evidence="17">
        <text>D-aspartate + O2 + H2O = oxaloacetate + H2O2 + NH4(+)</text>
        <dbReference type="Rhea" id="RHEA:12512"/>
        <dbReference type="ChEBI" id="CHEBI:15377"/>
        <dbReference type="ChEBI" id="CHEBI:15379"/>
        <dbReference type="ChEBI" id="CHEBI:16240"/>
        <dbReference type="ChEBI" id="CHEBI:16452"/>
        <dbReference type="ChEBI" id="CHEBI:28938"/>
        <dbReference type="ChEBI" id="CHEBI:29990"/>
        <dbReference type="EC" id="1.4.3.1"/>
    </reaction>
    <physiologicalReaction direction="left-to-right" evidence="17">
        <dbReference type="Rhea" id="RHEA:12513"/>
    </physiologicalReaction>
</comment>
<comment type="catalytic activity">
    <molecule>Isoform 3</molecule>
    <reaction evidence="17">
        <text>D-aspartate + O2 + H2O = oxaloacetate + H2O2 + NH4(+)</text>
        <dbReference type="Rhea" id="RHEA:12512"/>
        <dbReference type="ChEBI" id="CHEBI:15377"/>
        <dbReference type="ChEBI" id="CHEBI:15379"/>
        <dbReference type="ChEBI" id="CHEBI:16240"/>
        <dbReference type="ChEBI" id="CHEBI:16452"/>
        <dbReference type="ChEBI" id="CHEBI:28938"/>
        <dbReference type="ChEBI" id="CHEBI:29990"/>
        <dbReference type="EC" id="1.4.3.1"/>
    </reaction>
    <physiologicalReaction direction="left-to-right" evidence="17">
        <dbReference type="Rhea" id="RHEA:12513"/>
    </physiologicalReaction>
</comment>
<comment type="cofactor">
    <cofactor evidence="6 15 18">
        <name>FAD</name>
        <dbReference type="ChEBI" id="CHEBI:57692"/>
    </cofactor>
</comment>
<comment type="activity regulation">
    <text evidence="6 7 9 10 11">Inhibited by the benzodiazepine olanzapine (PubMed:28393897). Inhibited by aminooxyacetic acid, thiolactomycin, malonate and meso-tartrate (PubMed:20603179, PubMed:23391306, PubMed:25747990). Clozapine, haloperidol and chlorpromazine have no effect on activity (PubMed:28393897, PubMed:28560262). Not inhibited by sodium, potassium, magnesium, iron, calcium, cobalt, copper, nickel, manganese or zinc ions (PubMed:25747990). Not inhibited by AMP, ADP, ATP, or cAMP (PubMed:25747990). Not inhibited by pyridoxal 5'-phosphate (PubMed:25747990).</text>
</comment>
<comment type="biophysicochemical properties">
    <kinetics>
        <KM evidence="19">2.7 mM for D-aspartate (at pH 8.3)</KM>
        <KM evidence="15 16">1.05 mM for D-aspartate (at 25 degrees Celsius and at pH 8.3)</KM>
        <KM evidence="15">7.2 mM for D-aspartate (at 25 degrees Celsius)</KM>
        <KM evidence="9">2.1 mM for D-aspartate (at 37 degrees Celsius and at pH 8.3)</KM>
        <KM evidence="12">1.77 mM for D-aspartate (at 37 degrees Celsius and at pH 8.3)</KM>
        <KM evidence="19">6.8 mM for N-methyl D-aspartate (at pH 8.3)</KM>
        <KM evidence="15 16">2.76 mM for N-methyl D-aspartate (at 25 degrees Celsius and at pH 8.3)</KM>
        <KM evidence="15 16">31.5 mM for D-glutamate (at 25 degrees Celsius and at pH 8.3)</KM>
        <KM evidence="15 16">67 mM for D-asparagine (at 25 degrees Celsius and at pH 8.3)</KM>
        <KM evidence="15">96 mM for D-histidine (at 25 degrees Celsius and at pH 8.3)</KM>
        <KM evidence="16">96.2 mM for D-histidine (at 25 degrees Celsius and at pH 8.3)</KM>
        <KM evidence="15">339 mM for D-proline (at 25 degrees Celsius and at pH 8.3)</KM>
        <KM evidence="16">339.2 mM for D-proline (at 25 degrees Celsius and at pH 8.3)</KM>
        <text evidence="9 12 15 16">kcat is 81.3 sec(-1) with D-aspartate as substrate (at 25 degrees Celsius and at pH 8.3) (PubMed:32553892, PubMed:31914658). kcat is 229 sec(-1) with D-aspartate as substrate (at 25 degrees Celsius) (PubMed:31914658). kcat is 68.4 sec(-1) with D-aspartate as substrate (at 37 degrees Celsius and at pH 8.3) (PubMed:25747990). kcat is 45.8 sec(-1) with D-aspartate as substrate (at 37 degrees Celsius and at pH 8.3) (PubMed:28629864). kcat is 73.6 sec(-1) with N-methyl D-aspartate as substrate (at 25 degrees Celsius and at pH 8.3) (PubMed:32553892, PubMed:31914658). kcat is 11.3 sec(-1) with D-glutamate as substrate (at 25 degrees Celsius and at pH 8.3) (PubMed:32553892, PubMed:31914658). kcat is 8.3 sec(-1) with D-asparagine as substrate (at 25 degrees Celsius and at pH 8.3) (PubMed:32553892, PubMed:31914658). kcat is 1.2 sec(-1) with D-histidine as substrate (at 25 degrees Celsius and at pH 8.3) (PubMed:32553892, PubMed:31914658). kcat is 1.2 sec(-1) with D-proline as substrate (at 25 degrees Celsius and at pH 8.3) (PubMed:32553892, PubMed:31914658).</text>
    </kinetics>
    <phDependence>
        <text evidence="9">Optimum pH is 8.3-12.5.</text>
    </phDependence>
    <temperatureDependence>
        <text evidence="9">Optimum temperature is 45 degrees Celsius.</text>
    </temperatureDependence>
</comment>
<comment type="biophysicochemical properties">
    <molecule>Isoform DDO-1</molecule>
    <kinetics>
        <KM evidence="17">0.29 mM for D-aspartate (at 25 degrees Celsius and at pH 8)</KM>
        <text evidence="17">kcat is 27.4 sec(-1) with D-aspartate as substrate (at 25 degrees Celsius and at pH 8.3).</text>
    </kinetics>
</comment>
<comment type="biophysicochemical properties">
    <molecule>Isoform 3</molecule>
    <kinetics>
        <KM evidence="17">0.44 mM for D-aspartate (at 25 degrees Celsius and at pH 8)</KM>
        <text evidence="17">kcat is 27.8 sec(-1) with D-aspartate as substrate (at 25 degrees Celsius and at pH 8.3).</text>
    </kinetics>
</comment>
<comment type="subunit">
    <text evidence="12 13 15 18 20">Monomer (PubMed:28629864, PubMed:29292239, PubMed:31914658). Interacts with PEX5; the interaction is direct and required for localization of DDO to the peroxisome (PubMed:9820813). Interacts with DAOA; the interaction is direct and increases the degradation rate of DDO (PubMed:37805834).</text>
</comment>
<comment type="subcellular location">
    <subcellularLocation>
        <location evidence="5 18">Peroxisome matrix</location>
    </subcellularLocation>
    <subcellularLocation>
        <location evidence="18">Cytoplasm</location>
        <location evidence="18">Cytosol</location>
    </subcellularLocation>
    <text evidence="18">Active in the peroxisomal matrix.</text>
</comment>
<comment type="subcellular location">
    <molecule>Isoform DDO-1</molecule>
    <subcellularLocation>
        <location evidence="17">Peroxisome matrix</location>
    </subcellularLocation>
</comment>
<comment type="subcellular location">
    <molecule>Isoform 3</molecule>
    <subcellularLocation>
        <location evidence="17">Peroxisome matrix</location>
    </subcellularLocation>
</comment>
<comment type="alternative products">
    <event type="alternative splicing"/>
    <isoform>
        <id>Q99489-1</id>
        <name>DDO-1</name>
        <name>A</name>
        <name evidence="24">DASPO_341</name>
        <sequence type="displayed"/>
    </isoform>
    <isoform>
        <id>Q99489-2</id>
        <name>DDO-2</name>
        <name evidence="24">DASPO_282</name>
        <sequence type="described" ref="VSP_001269"/>
    </isoform>
    <isoform>
        <id>Q99489-3</id>
        <name>3</name>
        <name evidence="24">DASPO_369</name>
        <sequence type="described" ref="VSP_037664"/>
    </isoform>
    <isoform>
        <id>Q99489-4</id>
        <name>4</name>
        <sequence type="described" ref="VSP_037664 VSP_001269"/>
    </isoform>
</comment>
<comment type="tissue specificity">
    <text evidence="3 5 8 11 14">Expressed in epithelial cells of the proximal nephron tubules in the renal cortex (at protein level) (PubMed:12209855, PubMed:1991137). In the brain, expressed in the frontal, temporal, and occipital lobes of the cortex, hippocampus, striatum, diencephalon, brainstem, cerebellum, spinal cord, plexus choroiderus and ependyma (at protein level) (PubMed:12209855, PubMed:28560262). Expression is increased in the prefrontal cortex of schizophrenic patients (PubMed:25689573). Levels are normal in the superior frontal gyrus of patients with Alzheimer's disease (PubMed:30822420).</text>
</comment>
<comment type="PTM">
    <text evidence="18">May be S-nitrosylated.</text>
</comment>
<comment type="miscellaneous">
    <molecule>Isoform 3</molecule>
    <text evidence="17">Found in the hippocampus of female patients affected by Alzheimer's disease (PubMed:33650155).</text>
</comment>
<comment type="similarity">
    <text evidence="27">Belongs to the DAMOX/DASOX family.</text>
</comment>
<accession>Q99489</accession>
<accession>A8KAG4</accession>
<accession>Q5JXM4</accession>
<accession>Q5JXM5</accession>
<accession>Q5JXM6</accession>
<accession>Q8N552</accession>
<organism>
    <name type="scientific">Homo sapiens</name>
    <name type="common">Human</name>
    <dbReference type="NCBI Taxonomy" id="9606"/>
    <lineage>
        <taxon>Eukaryota</taxon>
        <taxon>Metazoa</taxon>
        <taxon>Chordata</taxon>
        <taxon>Craniata</taxon>
        <taxon>Vertebrata</taxon>
        <taxon>Euteleostomi</taxon>
        <taxon>Mammalia</taxon>
        <taxon>Eutheria</taxon>
        <taxon>Euarchontoglires</taxon>
        <taxon>Primates</taxon>
        <taxon>Haplorrhini</taxon>
        <taxon>Catarrhini</taxon>
        <taxon>Hominidae</taxon>
        <taxon>Homo</taxon>
    </lineage>
</organism>
<sequence length="341" mass="37535">MDTARIAVVGAGVVGLSTAVCISKLVPRCSVTIISDKFTPDTTSDVAAGMLIPHTYPDTPIHTQKQWFRETFNHLFAIANSAEAGDAGVHLVSGWQIFQSTPTEEVPFWADVVLGFRKMTEAELKKFPQYVFGQAFTTLKCECPAYLPWLEKRIKGSGGWTLTRRIEDLWELHPSFDIVVNCSGLGSRQLAGDSKIFPVRGQVLQVQAPWVEHFIRDGSGLTYIYPGTSHVTLGGTRQKGDWNLSPDAENSREILSRCCALEPSLHGACNIREKVGLRPYRPGVRLQTELLARDGQRLPVVHHYGHGSGGISVHWGTALEAARLVSECVHALRTPIPKSNL</sequence>
<keyword id="KW-0002">3D-structure</keyword>
<keyword id="KW-0025">Alternative splicing</keyword>
<keyword id="KW-0963">Cytoplasm</keyword>
<keyword id="KW-0274">FAD</keyword>
<keyword id="KW-0285">Flavoprotein</keyword>
<keyword id="KW-0560">Oxidoreductase</keyword>
<keyword id="KW-0576">Peroxisome</keyword>
<keyword id="KW-1267">Proteomics identification</keyword>
<keyword id="KW-1185">Reference proteome</keyword>
<proteinExistence type="evidence at protein level"/>